<gene>
    <name evidence="9 11" type="primary">Fbxo11</name>
</gene>
<feature type="chain" id="PRO_0000119891" description="F-box only protein 11">
    <location>
        <begin position="1"/>
        <end position="930"/>
    </location>
</feature>
<feature type="domain" description="F-box" evidence="2">
    <location>
        <begin position="156"/>
        <end position="202"/>
    </location>
</feature>
<feature type="repeat" description="PbH1 1">
    <location>
        <begin position="398"/>
        <end position="420"/>
    </location>
</feature>
<feature type="repeat" description="PbH1 2">
    <location>
        <begin position="421"/>
        <end position="443"/>
    </location>
</feature>
<feature type="repeat" description="PbH1 3">
    <location>
        <begin position="444"/>
        <end position="466"/>
    </location>
</feature>
<feature type="repeat" description="PbH1 4">
    <location>
        <begin position="467"/>
        <end position="489"/>
    </location>
</feature>
<feature type="repeat" description="PbH1 5">
    <location>
        <begin position="490"/>
        <end position="512"/>
    </location>
</feature>
<feature type="repeat" description="PbH1 6">
    <location>
        <begin position="513"/>
        <end position="535"/>
    </location>
</feature>
<feature type="repeat" description="PbH1 7">
    <location>
        <begin position="536"/>
        <end position="558"/>
    </location>
</feature>
<feature type="repeat" description="PbH1 8">
    <location>
        <begin position="559"/>
        <end position="581"/>
    </location>
</feature>
<feature type="repeat" description="PbH1 9">
    <location>
        <begin position="582"/>
        <end position="604"/>
    </location>
</feature>
<feature type="repeat" description="PbH1 10">
    <location>
        <begin position="605"/>
        <end position="627"/>
    </location>
</feature>
<feature type="repeat" description="PbH1 11">
    <location>
        <begin position="628"/>
        <end position="650"/>
    </location>
</feature>
<feature type="repeat" description="PbH1 12">
    <location>
        <begin position="651"/>
        <end position="673"/>
    </location>
</feature>
<feature type="repeat" description="PbH1 13">
    <location>
        <begin position="674"/>
        <end position="696"/>
    </location>
</feature>
<feature type="repeat" description="PbH1 14">
    <location>
        <begin position="697"/>
        <end position="719"/>
    </location>
</feature>
<feature type="repeat" description="PbH1 15">
    <location>
        <begin position="720"/>
        <end position="742"/>
    </location>
</feature>
<feature type="repeat" description="PbH1 16">
    <location>
        <begin position="743"/>
        <end position="765"/>
    </location>
</feature>
<feature type="repeat" description="PbH1 17">
    <location>
        <begin position="766"/>
        <end position="788"/>
    </location>
</feature>
<feature type="repeat" description="PbH1 18">
    <location>
        <begin position="789"/>
        <end position="811"/>
    </location>
</feature>
<feature type="repeat" description="PbH1 19">
    <location>
        <begin position="812"/>
        <end position="833"/>
    </location>
</feature>
<feature type="zinc finger region" description="UBR-type" evidence="3">
    <location>
        <begin position="836"/>
        <end position="907"/>
    </location>
</feature>
<feature type="region of interest" description="Disordered" evidence="4">
    <location>
        <begin position="1"/>
        <end position="150"/>
    </location>
</feature>
<feature type="compositionally biased region" description="Basic residues" evidence="4">
    <location>
        <begin position="7"/>
        <end position="16"/>
    </location>
</feature>
<feature type="compositionally biased region" description="Low complexity" evidence="4">
    <location>
        <begin position="17"/>
        <end position="27"/>
    </location>
</feature>
<feature type="compositionally biased region" description="Pro residues" evidence="4">
    <location>
        <begin position="28"/>
        <end position="73"/>
    </location>
</feature>
<feature type="compositionally biased region" description="Polar residues" evidence="4">
    <location>
        <begin position="117"/>
        <end position="132"/>
    </location>
</feature>
<feature type="splice variant" id="VSP_053353" description="In isoform 2 and isoform 3." evidence="8">
    <location>
        <begin position="1"/>
        <end position="87"/>
    </location>
</feature>
<feature type="splice variant" id="VSP_053354" description="In isoform 3." evidence="8">
    <location>
        <position position="152"/>
    </location>
</feature>
<feature type="mutagenesis site" description="In Mutt mutant; 13% of heterozygotes show a reduced startle response to a toneburst of 24 kHz and a mild craniofacial abnormality. 17% of homozygotes show perinatal lethality. Surviving homozygotes demonstrate a marked craniofacial abnormality and reduced hearing." evidence="6">
    <original>S</original>
    <variation>L</variation>
    <location>
        <position position="331"/>
    </location>
</feature>
<feature type="mutagenesis site" description="In Jeff mutant; heterozygotes are deaf with chronic proliferative otitis media, have a shortened snout and occipital region, and are smaller than wild-type littermates. Homozygotes demonstrate perinatal lethality due to respiratory problems, are born with upper eyelids open and show clefting of the hard or soft palate as well as facial clefting." evidence="5 6">
    <original>Q</original>
    <variation>L</variation>
    <location>
        <position position="578"/>
    </location>
</feature>
<feature type="sequence conflict" description="In Ref. 2; AAI17886." evidence="10" ref="2">
    <original>G</original>
    <variation>R</variation>
    <location>
        <position position="251"/>
    </location>
</feature>
<feature type="sequence conflict" description="In Ref. 2; AAH49946." evidence="10" ref="2">
    <original>V</original>
    <variation>F</variation>
    <location>
        <position position="694"/>
    </location>
</feature>
<organism>
    <name type="scientific">Mus musculus</name>
    <name type="common">Mouse</name>
    <dbReference type="NCBI Taxonomy" id="10090"/>
    <lineage>
        <taxon>Eukaryota</taxon>
        <taxon>Metazoa</taxon>
        <taxon>Chordata</taxon>
        <taxon>Craniata</taxon>
        <taxon>Vertebrata</taxon>
        <taxon>Euteleostomi</taxon>
        <taxon>Mammalia</taxon>
        <taxon>Eutheria</taxon>
        <taxon>Euarchontoglires</taxon>
        <taxon>Glires</taxon>
        <taxon>Rodentia</taxon>
        <taxon>Myomorpha</taxon>
        <taxon>Muroidea</taxon>
        <taxon>Muridae</taxon>
        <taxon>Murinae</taxon>
        <taxon>Mus</taxon>
        <taxon>Mus</taxon>
    </lineage>
</organism>
<comment type="function">
    <text evidence="1 7">Substrate recognition component of a SCF (SKP1-CUL1-F-box protein) E3 ubiquitin-protein ligase complex which mediates the ubiquitination and subsequent proteasomal degradation of target proteins, such as DTL/CDT2, BCL6, SNAI1 and PRDM1/BLIMP1 (PubMed:25827072). The SCF(FBXO11) complex mediates ubiquitination and degradation of BCL6, thereby playing a role in the germinal center B-cells terminal differentiation toward memory B-cells and plasma cells (By similarity). The SCF(FBXO11) complex also mediates ubiquitination and degradation of DTL, an important step for the regulation of TGF-beta signaling, cell migration and the timing of the cell-cycle progression and exit (By similarity). The SCF(FBXO11) complex also catalyzes ubiquitination and degradation of GSK3B-phosphorylated SNAI1 (PubMed:25827072). Binds to and neddylates phosphorylated p53/TP53, inhibiting its transcriptional activity (By similarity). Plays a role in the regulatiom of erythropoiesis but not myelopoiesis or megakaryopoiesis (By similarity). Mechanistically, activates erythroid genes by mediating the degradation of BAHD1, a heterochromatin-associated protein that recruits corepressors to H3K27me3 marks (By similarity). Participates in macrophage cell death and inflammation in response to bacterial toxins by regulating the expression of complement 5a receptor 1/C5AR1 and IL-1beta (By similarity). Acts as a critical regulator to determine the level of MHC-II by mediating the recognition of degron at the P/S/T domain of CIITA leading to its ubiquitination and subsequent degradation via the proteasome (By similarity). Participates in the antiviral repsonse by initiating the activation of TBK1-IRF3-IFN-I axis (By similarity). Mediates the 'Lys-63'-linked ubiquitination of TRAF3 to strengthen the interaction between TRAF3 and TBK1 (By similarity).</text>
</comment>
<comment type="pathway">
    <text evidence="7">Protein modification; protein ubiquitination.</text>
</comment>
<comment type="subunit">
    <text evidence="1">Component of the SCF(FBXO11) complex consisting of CUL1, RBX1, SKP1 and FBXO11. Interacts with CIITA.</text>
</comment>
<comment type="interaction">
    <interactant intactId="EBI-15955324">
        <id>Q7TPD1</id>
    </interactant>
    <interactant intactId="EBI-6253762">
        <id>P41183</id>
        <label>Bcl6</label>
    </interactant>
    <organismsDiffer>false</organismsDiffer>
    <experiments>2</experiments>
</comment>
<comment type="subcellular location">
    <subcellularLocation>
        <location evidence="1">Nucleus</location>
    </subcellularLocation>
    <subcellularLocation>
        <location evidence="1">Chromosome</location>
    </subcellularLocation>
</comment>
<comment type="alternative products">
    <event type="alternative splicing"/>
    <isoform>
        <id>Q7TPD1-1</id>
        <name>1</name>
        <sequence type="displayed"/>
    </isoform>
    <isoform>
        <id>Q7TPD1-2</id>
        <name>2</name>
        <sequence type="described" ref="VSP_053353"/>
    </isoform>
    <isoform>
        <id>Q7TPD1-3</id>
        <name>3</name>
        <sequence type="described" ref="VSP_053353 VSP_053354"/>
    </isoform>
</comment>
<comment type="tissue specificity">
    <text evidence="6">At 9.5 dpc and 10.5 dpc, expression is restricted to developing heart tissue. By 11.5 dpc and 12.5 dpc, detected in liver and subsequently in muscle by 13.5 dpc. At 14.5 dpc, still detected in heart, liver and muscle and also in the developing secondary palate including the nasal, medial and oral epithelia of the palatal shelves. At 15.5 dpc and 16.5 dpc, expressed in lung, kidney, heart, liver, muscle and adrenal gland. At this time, fusion of the palate shelves has occurred, with expression confined to the nasal and oral epithelia. At 17.5 dpc, expression in the lung is confined to bronchial epithelial cells and is evident in bone marrow, skin, tissue macrophages, osteoblasts, kidney, liver and spleen. At 18.5 dpc, expressed in bone marrow, liver, kidney and muscle but decreases in heart and lung. At this time, first detected in the middle ear epithelium. At the newborn stage, expression is strong in the middle ear where it is confined to mucin-secreting cells, as well as persisting in bone marrow, kidney and liver. Middle ear expression persists in postnatal head tissue at 4 and 13 days after birth and has declined by 21 days after birth. In the adult, expression is seen in alveolar macrophages of the lung, glomeruli and collecting tubules of the kidney, midbrain, heart and muscle.</text>
</comment>
<comment type="developmental stage">
    <text evidence="6">Not detected at 8.5 dpc. Expressed from 9.5 dpc throughout development and into adulthood (at protein level).</text>
</comment>
<comment type="disruption phenotype">
    <text evidence="7">Neonatal lethality (PubMed:25827072). Newborn mice show epidermal thickening and increased Snail protein levels in epidermis (PubMed:25827072).</text>
</comment>
<name>FBX11_MOUSE</name>
<keyword id="KW-0025">Alternative splicing</keyword>
<keyword id="KW-0158">Chromosome</keyword>
<keyword id="KW-0479">Metal-binding</keyword>
<keyword id="KW-0539">Nucleus</keyword>
<keyword id="KW-1185">Reference proteome</keyword>
<keyword id="KW-0677">Repeat</keyword>
<keyword id="KW-0833">Ubl conjugation pathway</keyword>
<keyword id="KW-0862">Zinc</keyword>
<keyword id="KW-0863">Zinc-finger</keyword>
<reference key="1">
    <citation type="journal article" date="2009" name="PLoS Biol.">
        <title>Lineage-specific biology revealed by a finished genome assembly of the mouse.</title>
        <authorList>
            <person name="Church D.M."/>
            <person name="Goodstadt L."/>
            <person name="Hillier L.W."/>
            <person name="Zody M.C."/>
            <person name="Goldstein S."/>
            <person name="She X."/>
            <person name="Bult C.J."/>
            <person name="Agarwala R."/>
            <person name="Cherry J.L."/>
            <person name="DiCuccio M."/>
            <person name="Hlavina W."/>
            <person name="Kapustin Y."/>
            <person name="Meric P."/>
            <person name="Maglott D."/>
            <person name="Birtle Z."/>
            <person name="Marques A.C."/>
            <person name="Graves T."/>
            <person name="Zhou S."/>
            <person name="Teague B."/>
            <person name="Potamousis K."/>
            <person name="Churas C."/>
            <person name="Place M."/>
            <person name="Herschleb J."/>
            <person name="Runnheim R."/>
            <person name="Forrest D."/>
            <person name="Amos-Landgraf J."/>
            <person name="Schwartz D.C."/>
            <person name="Cheng Z."/>
            <person name="Lindblad-Toh K."/>
            <person name="Eichler E.E."/>
            <person name="Ponting C.P."/>
        </authorList>
    </citation>
    <scope>NUCLEOTIDE SEQUENCE [LARGE SCALE GENOMIC DNA]</scope>
    <source>
        <strain>C57BL/6J</strain>
    </source>
</reference>
<reference key="2">
    <citation type="journal article" date="2004" name="Genome Res.">
        <title>The status, quality, and expansion of the NIH full-length cDNA project: the Mammalian Gene Collection (MGC).</title>
        <authorList>
            <consortium name="The MGC Project Team"/>
        </authorList>
    </citation>
    <scope>NUCLEOTIDE SEQUENCE [LARGE SCALE MRNA] (ISOFORMS 2 AND 3)</scope>
    <source>
        <strain>C57BL/6J</strain>
        <strain>FVB/N</strain>
        <tissue>Fetal brain</tissue>
        <tissue>Mammary tumor</tissue>
    </source>
</reference>
<reference key="3">
    <citation type="journal article" date="2003" name="J. Assoc. Res. Otolaryngol.">
        <title>The deaf mouse mutant Jeff (Jf) is a single gene model of otitis media.</title>
        <authorList>
            <person name="Hardisty R.E."/>
            <person name="Erven A."/>
            <person name="Logan K."/>
            <person name="Morse S."/>
            <person name="Guionaud S."/>
            <person name="Sancho-Oliver S."/>
            <person name="Hunter A.J."/>
            <person name="Brown S.D."/>
            <person name="Steel K.P."/>
        </authorList>
    </citation>
    <scope>CHARACTERIZATION OF JEFF MUTANT</scope>
</reference>
<reference key="4">
    <citation type="journal article" date="2006" name="Hum. Mol. Genet.">
        <title>A mutation in the F-box gene, Fbxo11, causes otitis media in the Jeff mouse.</title>
        <authorList>
            <person name="Hardisty-Hughes R.E."/>
            <person name="Tateossian H."/>
            <person name="Morse S.A."/>
            <person name="Romero M.R."/>
            <person name="Middleton A."/>
            <person name="Tymowska-Lalanne Z."/>
            <person name="Hunter A.J."/>
            <person name="Cheeseman M."/>
            <person name="Brown S.D."/>
        </authorList>
    </citation>
    <scope>TISSUE SPECIFICITY</scope>
    <scope>DEVELOPMENTAL STAGE</scope>
    <scope>CHARACTERIZATION OF JEFF AND MUTT MUTANTS</scope>
    <scope>MUTAGENESIS OF SER-331 AND GLN-578</scope>
</reference>
<reference key="5">
    <citation type="journal article" date="2015" name="Cancer Lett.">
        <title>FBXO11 promotes ubiquitination of the Snail family of transcription factors in cancer progression and epidermal development.</title>
        <authorList>
            <person name="Jin Y."/>
            <person name="Shenoy A.K."/>
            <person name="Doernberg S."/>
            <person name="Chen H."/>
            <person name="Luo H."/>
            <person name="Shen H."/>
            <person name="Lin T."/>
            <person name="Tarrash M."/>
            <person name="Cai Q."/>
            <person name="Hu X."/>
            <person name="Fiske R."/>
            <person name="Chen T."/>
            <person name="Wu L."/>
            <person name="Mohammed K.A."/>
            <person name="Rottiers V."/>
            <person name="Lee S.S."/>
            <person name="Lu J."/>
        </authorList>
    </citation>
    <scope>FUNCTION</scope>
    <scope>PATHWAY</scope>
    <scope>DISRUPTION PHENOTYPE</scope>
</reference>
<proteinExistence type="evidence at protein level"/>
<sequence>MNSVRAANRRPRRVSRPRPVQQQQQQPPQQPPPQPPQQQPPPQPPQQPPQQQPPPPPQQQPPPPPPPPPPPPQDRNNAGERDDVPADMVAEESGPGAQNSPYQLRRKTLLPKRTACPTKSSMEGASTSTTENFGHRAKRARVSGKSQDLSAAPAEQYLQEKLPDEVVLKIFSYLLEQDLCRAACVCKRFSELANDPILWKRLYMEVFEYTRPMMHPEPGKFYQINPEEYEHPNPWKESFQQLYKGAHVKPGFAEHFYSNPARYKGRENMLYYDTIEDALGGVQEAHFDGLIFVHSGIYTDEWIYIESPITMIGAAPGKVADKVIIENTRDSTFVFMEGSEDAYVGYMTIRFNPDDKSAQHHNAHHCLEITVNCSPIIDHCIIRSTCTVGSAVCVSGQGACPTIKHCNISDCENVGLYITDHAQGIYEDNEISNNALAGIWVKNHGNPIIRRNHIHHGRDVGVFTFDHGMGYFESCNIHRNRIAGFEVKAYANPTVVRCEIHHGQTGGIYVHEKGRGQFIENKIYANNFAGVWITSNSDPTIRGNSIFNGNQGGVYIFGDGRGLIEGNDIYGNALAGIQIRTNSCPIVRHNKIHDGQHGGIYVHEKGQGVIEENEVYSNTLAGVWVTTGSTPVLRRNRIHSGKQVGVYFYDNGHGVLEDNDIYNHMYSGVQIRTGSNPKIRRNKIWGGQNGGILVYNSGLGCIEDNEIFDNAMAGVWIKTDSNPTLRRNKIHDGRDGGICIFNGGRGLLEENDIFRNAQAGVLISTNSHPVLRKNRIFDGFAAGIEITNHATATLEGNQIFNNRFGGLFLASGVNVTMKDNKIMNNQDAIEKAVSRGQCLYKISSYTSYPMHDFYRCHTCNTTDRNAICVNCIKKCHQGHDVEFIRHDRFFCDCGAGTLSNPCTLAGEPTHDTDTLYDSAPPIESNTLQHN</sequence>
<evidence type="ECO:0000250" key="1">
    <source>
        <dbReference type="UniProtKB" id="Q86XK2"/>
    </source>
</evidence>
<evidence type="ECO:0000255" key="2">
    <source>
        <dbReference type="PROSITE-ProRule" id="PRU00080"/>
    </source>
</evidence>
<evidence type="ECO:0000255" key="3">
    <source>
        <dbReference type="PROSITE-ProRule" id="PRU00508"/>
    </source>
</evidence>
<evidence type="ECO:0000256" key="4">
    <source>
        <dbReference type="SAM" id="MobiDB-lite"/>
    </source>
</evidence>
<evidence type="ECO:0000269" key="5">
    <source>
    </source>
</evidence>
<evidence type="ECO:0000269" key="6">
    <source>
    </source>
</evidence>
<evidence type="ECO:0000269" key="7">
    <source>
    </source>
</evidence>
<evidence type="ECO:0000303" key="8">
    <source>
    </source>
</evidence>
<evidence type="ECO:0000303" key="9">
    <source>
    </source>
</evidence>
<evidence type="ECO:0000305" key="10"/>
<evidence type="ECO:0000312" key="11">
    <source>
        <dbReference type="MGI" id="MGI:2147134"/>
    </source>
</evidence>
<accession>Q7TPD1</accession>
<accession>A1A595</accession>
<accession>E9QP06</accession>
<accession>Q08EB9</accession>
<accession>Q08EC0</accession>
<accession>Q80UP0</accession>
<protein>
    <recommendedName>
        <fullName>F-box only protein 11</fullName>
    </recommendedName>
</protein>
<dbReference type="EMBL" id="AC087233">
    <property type="status" value="NOT_ANNOTATED_CDS"/>
    <property type="molecule type" value="Genomic_DNA"/>
</dbReference>
<dbReference type="EMBL" id="AC154673">
    <property type="status" value="NOT_ANNOTATED_CDS"/>
    <property type="molecule type" value="Genomic_DNA"/>
</dbReference>
<dbReference type="EMBL" id="BC049946">
    <property type="protein sequence ID" value="AAH49946.1"/>
    <property type="molecule type" value="mRNA"/>
</dbReference>
<dbReference type="EMBL" id="BC055343">
    <property type="protein sequence ID" value="AAH55343.1"/>
    <property type="molecule type" value="mRNA"/>
</dbReference>
<dbReference type="EMBL" id="BC117884">
    <property type="protein sequence ID" value="AAI17885.1"/>
    <property type="molecule type" value="mRNA"/>
</dbReference>
<dbReference type="EMBL" id="BC117885">
    <property type="protein sequence ID" value="AAI17886.1"/>
    <property type="molecule type" value="mRNA"/>
</dbReference>
<dbReference type="EMBL" id="BC128479">
    <property type="protein sequence ID" value="AAI28480.1"/>
    <property type="molecule type" value="mRNA"/>
</dbReference>
<dbReference type="CCDS" id="CCDS37717.1">
    <molecule id="Q7TPD1-1"/>
</dbReference>
<dbReference type="RefSeq" id="NP_001074503.1">
    <molecule id="Q7TPD1-1"/>
    <property type="nucleotide sequence ID" value="NM_001081034.3"/>
</dbReference>
<dbReference type="RefSeq" id="NP_001335177.1">
    <molecule id="Q7TPD1-2"/>
    <property type="nucleotide sequence ID" value="NM_001348248.1"/>
</dbReference>
<dbReference type="RefSeq" id="NP_001366233.1">
    <molecule id="Q7TPD1-2"/>
    <property type="nucleotide sequence ID" value="NM_001379304.1"/>
</dbReference>
<dbReference type="RefSeq" id="NP_001366234.1">
    <molecule id="Q7TPD1-3"/>
    <property type="nucleotide sequence ID" value="NM_001379305.1"/>
</dbReference>
<dbReference type="RefSeq" id="NP_001401369.1">
    <molecule id="Q7TPD1-3"/>
    <property type="nucleotide sequence ID" value="NM_001414440.1"/>
</dbReference>
<dbReference type="RefSeq" id="XP_006524267.1">
    <property type="nucleotide sequence ID" value="XM_006524204.3"/>
</dbReference>
<dbReference type="SMR" id="Q7TPD1"/>
<dbReference type="BioGRID" id="230356">
    <property type="interactions" value="6"/>
</dbReference>
<dbReference type="DIP" id="DIP-59433N"/>
<dbReference type="FunCoup" id="Q7TPD1">
    <property type="interactions" value="6194"/>
</dbReference>
<dbReference type="IntAct" id="Q7TPD1">
    <property type="interactions" value="1"/>
</dbReference>
<dbReference type="STRING" id="10090.ENSMUSP00000005504"/>
<dbReference type="iPTMnet" id="Q7TPD1"/>
<dbReference type="PhosphoSitePlus" id="Q7TPD1"/>
<dbReference type="PaxDb" id="10090-ENSMUSP00000005504"/>
<dbReference type="PeptideAtlas" id="Q7TPD1"/>
<dbReference type="ProteomicsDB" id="272960">
    <molecule id="Q7TPD1-1"/>
</dbReference>
<dbReference type="ProteomicsDB" id="272961">
    <molecule id="Q7TPD1-2"/>
</dbReference>
<dbReference type="ProteomicsDB" id="272962">
    <molecule id="Q7TPD1-3"/>
</dbReference>
<dbReference type="Pumba" id="Q7TPD1"/>
<dbReference type="Antibodypedia" id="15211">
    <property type="antibodies" value="356 antibodies from 29 providers"/>
</dbReference>
<dbReference type="Ensembl" id="ENSMUST00000005504.15">
    <molecule id="Q7TPD1-1"/>
    <property type="protein sequence ID" value="ENSMUSP00000005504.9"/>
    <property type="gene ID" value="ENSMUSG00000005371.16"/>
</dbReference>
<dbReference type="Ensembl" id="ENSMUST00000130379.9">
    <molecule id="Q7TPD1-3"/>
    <property type="protein sequence ID" value="ENSMUSP00000121206.3"/>
    <property type="gene ID" value="ENSMUSG00000005371.16"/>
</dbReference>
<dbReference type="Ensembl" id="ENSMUST00000235112.2">
    <molecule id="Q7TPD1-3"/>
    <property type="protein sequence ID" value="ENSMUSP00000157024.2"/>
    <property type="gene ID" value="ENSMUSG00000005371.16"/>
</dbReference>
<dbReference type="GeneID" id="225055"/>
<dbReference type="KEGG" id="mmu:225055"/>
<dbReference type="UCSC" id="uc008dvf.1">
    <molecule id="Q7TPD1-1"/>
    <property type="organism name" value="mouse"/>
</dbReference>
<dbReference type="UCSC" id="uc008dvg.1">
    <molecule id="Q7TPD1-3"/>
    <property type="organism name" value="mouse"/>
</dbReference>
<dbReference type="AGR" id="MGI:2147134"/>
<dbReference type="CTD" id="80204"/>
<dbReference type="MGI" id="MGI:2147134">
    <property type="gene designation" value="Fbxo11"/>
</dbReference>
<dbReference type="VEuPathDB" id="HostDB:ENSMUSG00000005371"/>
<dbReference type="eggNOG" id="KOG1777">
    <property type="taxonomic scope" value="Eukaryota"/>
</dbReference>
<dbReference type="GeneTree" id="ENSGT00530000063425"/>
<dbReference type="InParanoid" id="Q7TPD1"/>
<dbReference type="OMA" id="KESFHQL"/>
<dbReference type="OrthoDB" id="427974at2759"/>
<dbReference type="PhylomeDB" id="Q7TPD1"/>
<dbReference type="TreeFam" id="TF313602"/>
<dbReference type="Reactome" id="R-MMU-8951664">
    <property type="pathway name" value="Neddylation"/>
</dbReference>
<dbReference type="Reactome" id="R-MMU-983168">
    <property type="pathway name" value="Antigen processing: Ubiquitination &amp; Proteasome degradation"/>
</dbReference>
<dbReference type="UniPathway" id="UPA00143"/>
<dbReference type="BioGRID-ORCS" id="225055">
    <property type="hits" value="8 hits in 81 CRISPR screens"/>
</dbReference>
<dbReference type="ChiTaRS" id="Fbxo11">
    <property type="organism name" value="mouse"/>
</dbReference>
<dbReference type="PRO" id="PR:Q7TPD1"/>
<dbReference type="Proteomes" id="UP000000589">
    <property type="component" value="Chromosome 17"/>
</dbReference>
<dbReference type="RNAct" id="Q7TPD1">
    <property type="molecule type" value="protein"/>
</dbReference>
<dbReference type="Bgee" id="ENSMUSG00000005371">
    <property type="expression patterns" value="Expressed in animal zygote and 259 other cell types or tissues"/>
</dbReference>
<dbReference type="ExpressionAtlas" id="Q7TPD1">
    <property type="expression patterns" value="baseline and differential"/>
</dbReference>
<dbReference type="GO" id="GO:0005694">
    <property type="term" value="C:chromosome"/>
    <property type="evidence" value="ECO:0007669"/>
    <property type="project" value="UniProtKB-SubCell"/>
</dbReference>
<dbReference type="GO" id="GO:0005737">
    <property type="term" value="C:cytoplasm"/>
    <property type="evidence" value="ECO:0007669"/>
    <property type="project" value="Ensembl"/>
</dbReference>
<dbReference type="GO" id="GO:0005730">
    <property type="term" value="C:nucleolus"/>
    <property type="evidence" value="ECO:0007669"/>
    <property type="project" value="Ensembl"/>
</dbReference>
<dbReference type="GO" id="GO:0005654">
    <property type="term" value="C:nucleoplasm"/>
    <property type="evidence" value="ECO:0007669"/>
    <property type="project" value="Ensembl"/>
</dbReference>
<dbReference type="GO" id="GO:0016274">
    <property type="term" value="F:protein-arginine N-methyltransferase activity"/>
    <property type="evidence" value="ECO:0007669"/>
    <property type="project" value="Ensembl"/>
</dbReference>
<dbReference type="GO" id="GO:1990756">
    <property type="term" value="F:ubiquitin-like ligase-substrate adaptor activity"/>
    <property type="evidence" value="ECO:0000250"/>
    <property type="project" value="UniProtKB"/>
</dbReference>
<dbReference type="GO" id="GO:0004842">
    <property type="term" value="F:ubiquitin-protein transferase activity"/>
    <property type="evidence" value="ECO:0000315"/>
    <property type="project" value="CACAO"/>
</dbReference>
<dbReference type="GO" id="GO:0008270">
    <property type="term" value="F:zinc ion binding"/>
    <property type="evidence" value="ECO:0007669"/>
    <property type="project" value="UniProtKB-KW"/>
</dbReference>
<dbReference type="GO" id="GO:0010719">
    <property type="term" value="P:negative regulation of epithelial to mesenchymal transition"/>
    <property type="evidence" value="ECO:0000250"/>
    <property type="project" value="UniProtKB"/>
</dbReference>
<dbReference type="GO" id="GO:0043161">
    <property type="term" value="P:proteasome-mediated ubiquitin-dependent protein catabolic process"/>
    <property type="evidence" value="ECO:0000250"/>
    <property type="project" value="UniProtKB"/>
</dbReference>
<dbReference type="GO" id="GO:0016567">
    <property type="term" value="P:protein ubiquitination"/>
    <property type="evidence" value="ECO:0007669"/>
    <property type="project" value="UniProtKB-UniPathway"/>
</dbReference>
<dbReference type="GO" id="GO:0007605">
    <property type="term" value="P:sensory perception of sound"/>
    <property type="evidence" value="ECO:0000315"/>
    <property type="project" value="UniProtKB"/>
</dbReference>
<dbReference type="CDD" id="cd22091">
    <property type="entry name" value="F-box_FBXO11"/>
    <property type="match status" value="1"/>
</dbReference>
<dbReference type="CDD" id="cd19676">
    <property type="entry name" value="UBR-box_UBR6_FBXO11"/>
    <property type="match status" value="1"/>
</dbReference>
<dbReference type="FunFam" id="1.20.1280.50:FF:000003">
    <property type="entry name" value="F-box only protein 11"/>
    <property type="match status" value="1"/>
</dbReference>
<dbReference type="FunFam" id="2.160.20.10:FF:000005">
    <property type="entry name" value="F-box only protein 11"/>
    <property type="match status" value="1"/>
</dbReference>
<dbReference type="FunFam" id="2.160.20.10:FF:000006">
    <property type="entry name" value="F-box only protein 11"/>
    <property type="match status" value="1"/>
</dbReference>
<dbReference type="FunFam" id="2.160.20.10:FF:000007">
    <property type="entry name" value="F-box only protein 11"/>
    <property type="match status" value="1"/>
</dbReference>
<dbReference type="Gene3D" id="1.20.1280.50">
    <property type="match status" value="1"/>
</dbReference>
<dbReference type="Gene3D" id="2.160.20.10">
    <property type="entry name" value="Single-stranded right-handed beta-helix, Pectin lyase-like"/>
    <property type="match status" value="3"/>
</dbReference>
<dbReference type="InterPro" id="IPR039448">
    <property type="entry name" value="Beta_helix"/>
</dbReference>
<dbReference type="InterPro" id="IPR006633">
    <property type="entry name" value="Carb-bd_sugar_hydrolysis-dom"/>
</dbReference>
<dbReference type="InterPro" id="IPR036047">
    <property type="entry name" value="F-box-like_dom_sf"/>
</dbReference>
<dbReference type="InterPro" id="IPR001810">
    <property type="entry name" value="F-box_dom"/>
</dbReference>
<dbReference type="InterPro" id="IPR047505">
    <property type="entry name" value="F-box_FBXO11"/>
</dbReference>
<dbReference type="InterPro" id="IPR047504">
    <property type="entry name" value="FBXO11_UBR-box"/>
</dbReference>
<dbReference type="InterPro" id="IPR007742">
    <property type="entry name" value="NosD_dom"/>
</dbReference>
<dbReference type="InterPro" id="IPR022441">
    <property type="entry name" value="Para_beta_helix_rpt-2"/>
</dbReference>
<dbReference type="InterPro" id="IPR006626">
    <property type="entry name" value="PbH1"/>
</dbReference>
<dbReference type="InterPro" id="IPR012334">
    <property type="entry name" value="Pectin_lyas_fold"/>
</dbReference>
<dbReference type="InterPro" id="IPR011050">
    <property type="entry name" value="Pectin_lyase_fold/virulence"/>
</dbReference>
<dbReference type="InterPro" id="IPR051550">
    <property type="entry name" value="SCF-Subunits/Alg-Epimerases"/>
</dbReference>
<dbReference type="InterPro" id="IPR003126">
    <property type="entry name" value="Znf_UBR"/>
</dbReference>
<dbReference type="NCBIfam" id="TIGR03804">
    <property type="entry name" value="para_beta_helix"/>
    <property type="match status" value="4"/>
</dbReference>
<dbReference type="PANTHER" id="PTHR22990">
    <property type="entry name" value="F-BOX ONLY PROTEIN"/>
    <property type="match status" value="1"/>
</dbReference>
<dbReference type="PANTHER" id="PTHR22990:SF20">
    <property type="entry name" value="F-BOX ONLY PROTEIN 11"/>
    <property type="match status" value="1"/>
</dbReference>
<dbReference type="Pfam" id="PF13229">
    <property type="entry name" value="Beta_helix"/>
    <property type="match status" value="2"/>
</dbReference>
<dbReference type="Pfam" id="PF12937">
    <property type="entry name" value="F-box-like"/>
    <property type="match status" value="1"/>
</dbReference>
<dbReference type="Pfam" id="PF05048">
    <property type="entry name" value="NosD"/>
    <property type="match status" value="1"/>
</dbReference>
<dbReference type="Pfam" id="PF02207">
    <property type="entry name" value="zf-UBR"/>
    <property type="match status" value="1"/>
</dbReference>
<dbReference type="SMART" id="SM00722">
    <property type="entry name" value="CASH"/>
    <property type="match status" value="3"/>
</dbReference>
<dbReference type="SMART" id="SM00256">
    <property type="entry name" value="FBOX"/>
    <property type="match status" value="1"/>
</dbReference>
<dbReference type="SMART" id="SM00710">
    <property type="entry name" value="PbH1"/>
    <property type="match status" value="19"/>
</dbReference>
<dbReference type="SMART" id="SM00396">
    <property type="entry name" value="ZnF_UBR1"/>
    <property type="match status" value="1"/>
</dbReference>
<dbReference type="SUPFAM" id="SSF81383">
    <property type="entry name" value="F-box domain"/>
    <property type="match status" value="1"/>
</dbReference>
<dbReference type="SUPFAM" id="SSF101447">
    <property type="entry name" value="Formin homology 2 domain (FH2 domain)"/>
    <property type="match status" value="1"/>
</dbReference>
<dbReference type="SUPFAM" id="SSF51126">
    <property type="entry name" value="Pectin lyase-like"/>
    <property type="match status" value="3"/>
</dbReference>
<dbReference type="PROSITE" id="PS50181">
    <property type="entry name" value="FBOX"/>
    <property type="match status" value="1"/>
</dbReference>
<dbReference type="PROSITE" id="PS51157">
    <property type="entry name" value="ZF_UBR"/>
    <property type="match status" value="1"/>
</dbReference>